<evidence type="ECO:0000255" key="1">
    <source>
        <dbReference type="HAMAP-Rule" id="MF_00197"/>
    </source>
</evidence>
<evidence type="ECO:0000256" key="2">
    <source>
        <dbReference type="SAM" id="MobiDB-lite"/>
    </source>
</evidence>
<accession>Q2YLR4</accession>
<reference key="1">
    <citation type="journal article" date="2005" name="Infect. Immun.">
        <title>Whole-genome analyses of speciation events in pathogenic Brucellae.</title>
        <authorList>
            <person name="Chain P.S."/>
            <person name="Comerci D.J."/>
            <person name="Tolmasky M.E."/>
            <person name="Larimer F.W."/>
            <person name="Malfatti S.A."/>
            <person name="Vergez L.M."/>
            <person name="Aguero F."/>
            <person name="Land M.L."/>
            <person name="Ugalde R.A."/>
            <person name="Garcia E."/>
        </authorList>
    </citation>
    <scope>NUCLEOTIDE SEQUENCE [LARGE SCALE GENOMIC DNA]</scope>
    <source>
        <strain>2308</strain>
    </source>
</reference>
<organism>
    <name type="scientific">Brucella abortus (strain 2308)</name>
    <dbReference type="NCBI Taxonomy" id="359391"/>
    <lineage>
        <taxon>Bacteria</taxon>
        <taxon>Pseudomonadati</taxon>
        <taxon>Pseudomonadota</taxon>
        <taxon>Alphaproteobacteria</taxon>
        <taxon>Hyphomicrobiales</taxon>
        <taxon>Brucellaceae</taxon>
        <taxon>Brucella/Ochrobactrum group</taxon>
        <taxon>Brucella</taxon>
    </lineage>
</organism>
<proteinExistence type="inferred from homology"/>
<sequence length="303" mass="32310">MATKAAFARMNGLGNQIIVADMRGRADSITSAAAIRLASDSETAFDQIMAIHDPRTPGTDYYIAIINCDGTQAQACGNGTRCVVQALAAETGRHAFTFETRAGILTATEHDDGLISVDMGTPRFDWQDIPLAQAVADTRKIELQVGPADAPVLHSPSIASMGNPHAVFWVDKDVWSYELDKFGPLLENHPIFPERANISIAHVTSSDTIDLRTWERGAGLTRACGSAACAAAVSAARTGRTGRKVTVNVPGGPLLIEWRDDDHVMMTGPAEWEFSGTFDPATGEWSRDTQGLQGSGNADRGAA</sequence>
<dbReference type="EC" id="5.1.1.7" evidence="1"/>
<dbReference type="EMBL" id="AM040264">
    <property type="protein sequence ID" value="CAJ11888.1"/>
    <property type="molecule type" value="Genomic_DNA"/>
</dbReference>
<dbReference type="RefSeq" id="WP_002966997.1">
    <property type="nucleotide sequence ID" value="NZ_KN046823.1"/>
</dbReference>
<dbReference type="SMR" id="Q2YLR4"/>
<dbReference type="STRING" id="359391.BAB1_1932"/>
<dbReference type="GeneID" id="93017739"/>
<dbReference type="KEGG" id="bmf:BAB1_1932"/>
<dbReference type="PATRIC" id="fig|359391.11.peg.1172"/>
<dbReference type="HOGENOM" id="CLU_053306_1_0_5"/>
<dbReference type="PhylomeDB" id="Q2YLR4"/>
<dbReference type="UniPathway" id="UPA00034">
    <property type="reaction ID" value="UER00025"/>
</dbReference>
<dbReference type="Proteomes" id="UP000002719">
    <property type="component" value="Chromosome I"/>
</dbReference>
<dbReference type="GO" id="GO:0005829">
    <property type="term" value="C:cytosol"/>
    <property type="evidence" value="ECO:0007669"/>
    <property type="project" value="TreeGrafter"/>
</dbReference>
<dbReference type="GO" id="GO:0008837">
    <property type="term" value="F:diaminopimelate epimerase activity"/>
    <property type="evidence" value="ECO:0007669"/>
    <property type="project" value="UniProtKB-UniRule"/>
</dbReference>
<dbReference type="GO" id="GO:0009089">
    <property type="term" value="P:lysine biosynthetic process via diaminopimelate"/>
    <property type="evidence" value="ECO:0007669"/>
    <property type="project" value="UniProtKB-UniRule"/>
</dbReference>
<dbReference type="Gene3D" id="3.10.310.10">
    <property type="entry name" value="Diaminopimelate Epimerase, Chain A, domain 1"/>
    <property type="match status" value="2"/>
</dbReference>
<dbReference type="HAMAP" id="MF_00197">
    <property type="entry name" value="DAP_epimerase"/>
    <property type="match status" value="1"/>
</dbReference>
<dbReference type="InterPro" id="IPR018510">
    <property type="entry name" value="DAP_epimerase_AS"/>
</dbReference>
<dbReference type="InterPro" id="IPR001653">
    <property type="entry name" value="DAP_epimerase_DapF"/>
</dbReference>
<dbReference type="NCBIfam" id="TIGR00652">
    <property type="entry name" value="DapF"/>
    <property type="match status" value="1"/>
</dbReference>
<dbReference type="PANTHER" id="PTHR31689:SF0">
    <property type="entry name" value="DIAMINOPIMELATE EPIMERASE"/>
    <property type="match status" value="1"/>
</dbReference>
<dbReference type="PANTHER" id="PTHR31689">
    <property type="entry name" value="DIAMINOPIMELATE EPIMERASE, CHLOROPLASTIC"/>
    <property type="match status" value="1"/>
</dbReference>
<dbReference type="Pfam" id="PF01678">
    <property type="entry name" value="DAP_epimerase"/>
    <property type="match status" value="2"/>
</dbReference>
<dbReference type="SUPFAM" id="SSF54506">
    <property type="entry name" value="Diaminopimelate epimerase-like"/>
    <property type="match status" value="2"/>
</dbReference>
<dbReference type="PROSITE" id="PS01326">
    <property type="entry name" value="DAP_EPIMERASE"/>
    <property type="match status" value="1"/>
</dbReference>
<name>DAPF_BRUA2</name>
<protein>
    <recommendedName>
        <fullName evidence="1">Diaminopimelate epimerase</fullName>
        <shortName evidence="1">DAP epimerase</shortName>
        <ecNumber evidence="1">5.1.1.7</ecNumber>
    </recommendedName>
    <alternativeName>
        <fullName evidence="1">PLP-independent amino acid racemase</fullName>
    </alternativeName>
</protein>
<feature type="chain" id="PRO_1000011850" description="Diaminopimelate epimerase">
    <location>
        <begin position="1"/>
        <end position="303"/>
    </location>
</feature>
<feature type="region of interest" description="Disordered" evidence="2">
    <location>
        <begin position="278"/>
        <end position="303"/>
    </location>
</feature>
<feature type="active site" description="Proton donor" evidence="1">
    <location>
        <position position="76"/>
    </location>
</feature>
<feature type="active site" description="Proton acceptor" evidence="1">
    <location>
        <position position="224"/>
    </location>
</feature>
<feature type="binding site" evidence="1">
    <location>
        <position position="15"/>
    </location>
    <ligand>
        <name>substrate</name>
    </ligand>
</feature>
<feature type="binding site" evidence="1">
    <location>
        <position position="47"/>
    </location>
    <ligand>
        <name>substrate</name>
    </ligand>
</feature>
<feature type="binding site" evidence="1">
    <location>
        <position position="67"/>
    </location>
    <ligand>
        <name>substrate</name>
    </ligand>
</feature>
<feature type="binding site" evidence="1">
    <location>
        <begin position="77"/>
        <end position="78"/>
    </location>
    <ligand>
        <name>substrate</name>
    </ligand>
</feature>
<feature type="binding site" evidence="1">
    <location>
        <position position="163"/>
    </location>
    <ligand>
        <name>substrate</name>
    </ligand>
</feature>
<feature type="binding site" evidence="1">
    <location>
        <position position="197"/>
    </location>
    <ligand>
        <name>substrate</name>
    </ligand>
</feature>
<feature type="binding site" evidence="1">
    <location>
        <begin position="215"/>
        <end position="216"/>
    </location>
    <ligand>
        <name>substrate</name>
    </ligand>
</feature>
<feature type="binding site" evidence="1">
    <location>
        <begin position="225"/>
        <end position="226"/>
    </location>
    <ligand>
        <name>substrate</name>
    </ligand>
</feature>
<feature type="site" description="Could be important to modulate the pK values of the two catalytic cysteine residues" evidence="1">
    <location>
        <position position="165"/>
    </location>
</feature>
<feature type="site" description="Could be important to modulate the pK values of the two catalytic cysteine residues" evidence="1">
    <location>
        <position position="215"/>
    </location>
</feature>
<keyword id="KW-0028">Amino-acid biosynthesis</keyword>
<keyword id="KW-0963">Cytoplasm</keyword>
<keyword id="KW-0413">Isomerase</keyword>
<keyword id="KW-0457">Lysine biosynthesis</keyword>
<keyword id="KW-1185">Reference proteome</keyword>
<comment type="function">
    <text evidence="1">Catalyzes the stereoinversion of LL-2,6-diaminopimelate (L,L-DAP) to meso-diaminopimelate (meso-DAP), a precursor of L-lysine and an essential component of the bacterial peptidoglycan.</text>
</comment>
<comment type="catalytic activity">
    <reaction evidence="1">
        <text>(2S,6S)-2,6-diaminopimelate = meso-2,6-diaminopimelate</text>
        <dbReference type="Rhea" id="RHEA:15393"/>
        <dbReference type="ChEBI" id="CHEBI:57609"/>
        <dbReference type="ChEBI" id="CHEBI:57791"/>
        <dbReference type="EC" id="5.1.1.7"/>
    </reaction>
</comment>
<comment type="pathway">
    <text evidence="1">Amino-acid biosynthesis; L-lysine biosynthesis via DAP pathway; DL-2,6-diaminopimelate from LL-2,6-diaminopimelate: step 1/1.</text>
</comment>
<comment type="subunit">
    <text evidence="1">Homodimer.</text>
</comment>
<comment type="subcellular location">
    <subcellularLocation>
        <location evidence="1">Cytoplasm</location>
    </subcellularLocation>
</comment>
<comment type="similarity">
    <text evidence="1">Belongs to the diaminopimelate epimerase family.</text>
</comment>
<gene>
    <name evidence="1" type="primary">dapF</name>
    <name type="ordered locus">BAB1_1932</name>
</gene>